<organism>
    <name type="scientific">Homo sapiens</name>
    <name type="common">Human</name>
    <dbReference type="NCBI Taxonomy" id="9606"/>
    <lineage>
        <taxon>Eukaryota</taxon>
        <taxon>Metazoa</taxon>
        <taxon>Chordata</taxon>
        <taxon>Craniata</taxon>
        <taxon>Vertebrata</taxon>
        <taxon>Euteleostomi</taxon>
        <taxon>Mammalia</taxon>
        <taxon>Eutheria</taxon>
        <taxon>Euarchontoglires</taxon>
        <taxon>Primates</taxon>
        <taxon>Haplorrhini</taxon>
        <taxon>Catarrhini</taxon>
        <taxon>Hominidae</taxon>
        <taxon>Homo</taxon>
    </lineage>
</organism>
<protein>
    <recommendedName>
        <fullName>Growth arrest-specific protein 7</fullName>
        <shortName>GAS-7</shortName>
    </recommendedName>
</protein>
<name>GAS7_HUMAN</name>
<keyword id="KW-0002">3D-structure</keyword>
<keyword id="KW-0025">Alternative splicing</keyword>
<keyword id="KW-0160">Chromosomal rearrangement</keyword>
<keyword id="KW-0175">Coiled coil</keyword>
<keyword id="KW-0963">Cytoplasm</keyword>
<keyword id="KW-0217">Developmental protein</keyword>
<keyword id="KW-0221">Differentiation</keyword>
<keyword id="KW-0524">Neurogenesis</keyword>
<keyword id="KW-0597">Phosphoprotein</keyword>
<keyword id="KW-1267">Proteomics identification</keyword>
<keyword id="KW-0656">Proto-oncogene</keyword>
<keyword id="KW-1185">Reference proteome</keyword>
<keyword id="KW-0728">SH3 domain</keyword>
<proteinExistence type="evidence at protein level"/>
<feature type="chain" id="PRO_0000076057" description="Growth arrest-specific protein 7">
    <location>
        <begin position="1"/>
        <end position="476"/>
    </location>
</feature>
<feature type="domain" description="SH3" evidence="4">
    <location>
        <begin position="1"/>
        <end position="62"/>
    </location>
</feature>
<feature type="domain" description="WW" evidence="5">
    <location>
        <begin position="77"/>
        <end position="110"/>
    </location>
</feature>
<feature type="domain" description="F-BAR" evidence="6">
    <location>
        <begin position="196"/>
        <end position="456"/>
    </location>
</feature>
<feature type="region of interest" description="Disordered" evidence="7">
    <location>
        <begin position="100"/>
        <end position="171"/>
    </location>
</feature>
<feature type="coiled-coil region" evidence="3">
    <location>
        <begin position="309"/>
        <end position="419"/>
    </location>
</feature>
<feature type="compositionally biased region" description="Low complexity" evidence="7">
    <location>
        <begin position="108"/>
        <end position="120"/>
    </location>
</feature>
<feature type="compositionally biased region" description="Polar residues" evidence="7">
    <location>
        <begin position="150"/>
        <end position="171"/>
    </location>
</feature>
<feature type="modified residue" description="Phosphoserine" evidence="15">
    <location>
        <position position="117"/>
    </location>
</feature>
<feature type="modified residue" description="Phosphoserine" evidence="2">
    <location>
        <position position="163"/>
    </location>
</feature>
<feature type="splice variant" id="VSP_006802" description="In isoform 2." evidence="9 12">
    <location>
        <begin position="1"/>
        <end position="140"/>
    </location>
</feature>
<feature type="splice variant" id="VSP_035988" description="In isoform 1." evidence="10 11 13">
    <location>
        <begin position="1"/>
        <end position="64"/>
    </location>
</feature>
<feature type="splice variant" id="VSP_044294" description="In isoform 4." evidence="9 11">
    <location>
        <begin position="1"/>
        <end position="60"/>
    </location>
</feature>
<feature type="splice variant" id="VSP_044295" description="In isoform 4." evidence="9 11">
    <original>E</original>
    <variation>M</variation>
    <location>
        <position position="61"/>
    </location>
</feature>
<feature type="splice variant" id="VSP_006803" description="In isoform 2." evidence="9 12">
    <original>PPETAHMSVRKSTGDS</original>
    <variation>MSNMENSFDDVSCLSP</variation>
    <location>
        <begin position="141"/>
        <end position="156"/>
    </location>
</feature>
<feature type="sequence conflict" description="In Ref. 1; CAA12177." evidence="14" ref="1">
    <original>E</original>
    <variation>D</variation>
    <location>
        <position position="301"/>
    </location>
</feature>
<feature type="strand" evidence="16">
    <location>
        <begin position="5"/>
        <end position="9"/>
    </location>
</feature>
<feature type="strand" evidence="16">
    <location>
        <begin position="28"/>
        <end position="32"/>
    </location>
</feature>
<feature type="strand" evidence="16">
    <location>
        <begin position="40"/>
        <end position="43"/>
    </location>
</feature>
<feature type="strand" evidence="16">
    <location>
        <begin position="49"/>
        <end position="52"/>
    </location>
</feature>
<feature type="helix" evidence="16">
    <location>
        <begin position="54"/>
        <end position="56"/>
    </location>
</feature>
<feature type="strand" evidence="16">
    <location>
        <begin position="57"/>
        <end position="59"/>
    </location>
</feature>
<feature type="strand" evidence="17">
    <location>
        <begin position="84"/>
        <end position="87"/>
    </location>
</feature>
<feature type="strand" evidence="17">
    <location>
        <begin position="93"/>
        <end position="96"/>
    </location>
</feature>
<feature type="strand" evidence="17">
    <location>
        <begin position="98"/>
        <end position="100"/>
    </location>
</feature>
<feature type="strand" evidence="17">
    <location>
        <begin position="103"/>
        <end position="107"/>
    </location>
</feature>
<reference key="1">
    <citation type="submission" date="1998-03" db="EMBL/GenBank/DDBJ databases">
        <title>Human gas7: conservation of a mammalian growth-arrest-specific gene.</title>
        <authorList>
            <person name="Chao C.C.-K."/>
            <person name="Kuo J.T."/>
            <person name="Ju Y.-T."/>
            <person name="Lin-Chao S."/>
        </authorList>
    </citation>
    <scope>NUCLEOTIDE SEQUENCE [MRNA] (ISOFORM 2)</scope>
    <source>
        <tissue>Cerebellum</tissue>
    </source>
</reference>
<reference key="2">
    <citation type="journal article" date="1997" name="DNA Res.">
        <title>Prediction of the coding sequences of unidentified human genes. VIII. 78 new cDNA clones from brain which code for large proteins in vitro.</title>
        <authorList>
            <person name="Ishikawa K."/>
            <person name="Nagase T."/>
            <person name="Nakajima D."/>
            <person name="Seki N."/>
            <person name="Ohira M."/>
            <person name="Miyajima N."/>
            <person name="Tanaka A."/>
            <person name="Kotani H."/>
            <person name="Nomura N."/>
            <person name="Ohara O."/>
        </authorList>
    </citation>
    <scope>NUCLEOTIDE SEQUENCE [LARGE SCALE MRNA] (ISOFORMS 1 AND 4)</scope>
    <source>
        <tissue>Brain</tissue>
    </source>
</reference>
<reference key="3">
    <citation type="submission" date="2003-06" db="EMBL/GenBank/DDBJ databases">
        <authorList>
            <person name="Shan Y.X."/>
            <person name="Yu L."/>
        </authorList>
    </citation>
    <scope>NUCLEOTIDE SEQUENCE [LARGE SCALE MRNA] (ISOFORM 3)</scope>
</reference>
<reference key="4">
    <citation type="submission" date="2003-05" db="EMBL/GenBank/DDBJ databases">
        <title>Cloning of human full-length CDSs in BD Creator(TM) system donor vector.</title>
        <authorList>
            <person name="Kalnine N."/>
            <person name="Chen X."/>
            <person name="Rolfs A."/>
            <person name="Halleck A."/>
            <person name="Hines L."/>
            <person name="Eisenstein S."/>
            <person name="Koundinya M."/>
            <person name="Raphael J."/>
            <person name="Moreira D."/>
            <person name="Kelley T."/>
            <person name="LaBaer J."/>
            <person name="Lin Y."/>
            <person name="Phelan M."/>
            <person name="Farmer A."/>
        </authorList>
    </citation>
    <scope>NUCLEOTIDE SEQUENCE [LARGE SCALE MRNA] (ISOFORM 1)</scope>
</reference>
<reference key="5">
    <citation type="journal article" date="2004" name="Nat. Genet.">
        <title>Complete sequencing and characterization of 21,243 full-length human cDNAs.</title>
        <authorList>
            <person name="Ota T."/>
            <person name="Suzuki Y."/>
            <person name="Nishikawa T."/>
            <person name="Otsuki T."/>
            <person name="Sugiyama T."/>
            <person name="Irie R."/>
            <person name="Wakamatsu A."/>
            <person name="Hayashi K."/>
            <person name="Sato H."/>
            <person name="Nagai K."/>
            <person name="Kimura K."/>
            <person name="Makita H."/>
            <person name="Sekine M."/>
            <person name="Obayashi M."/>
            <person name="Nishi T."/>
            <person name="Shibahara T."/>
            <person name="Tanaka T."/>
            <person name="Ishii S."/>
            <person name="Yamamoto J."/>
            <person name="Saito K."/>
            <person name="Kawai Y."/>
            <person name="Isono Y."/>
            <person name="Nakamura Y."/>
            <person name="Nagahari K."/>
            <person name="Murakami K."/>
            <person name="Yasuda T."/>
            <person name="Iwayanagi T."/>
            <person name="Wagatsuma M."/>
            <person name="Shiratori A."/>
            <person name="Sudo H."/>
            <person name="Hosoiri T."/>
            <person name="Kaku Y."/>
            <person name="Kodaira H."/>
            <person name="Kondo H."/>
            <person name="Sugawara M."/>
            <person name="Takahashi M."/>
            <person name="Kanda K."/>
            <person name="Yokoi T."/>
            <person name="Furuya T."/>
            <person name="Kikkawa E."/>
            <person name="Omura Y."/>
            <person name="Abe K."/>
            <person name="Kamihara K."/>
            <person name="Katsuta N."/>
            <person name="Sato K."/>
            <person name="Tanikawa M."/>
            <person name="Yamazaki M."/>
            <person name="Ninomiya K."/>
            <person name="Ishibashi T."/>
            <person name="Yamashita H."/>
            <person name="Murakawa K."/>
            <person name="Fujimori K."/>
            <person name="Tanai H."/>
            <person name="Kimata M."/>
            <person name="Watanabe M."/>
            <person name="Hiraoka S."/>
            <person name="Chiba Y."/>
            <person name="Ishida S."/>
            <person name="Ono Y."/>
            <person name="Takiguchi S."/>
            <person name="Watanabe S."/>
            <person name="Yosida M."/>
            <person name="Hotuta T."/>
            <person name="Kusano J."/>
            <person name="Kanehori K."/>
            <person name="Takahashi-Fujii A."/>
            <person name="Hara H."/>
            <person name="Tanase T.-O."/>
            <person name="Nomura Y."/>
            <person name="Togiya S."/>
            <person name="Komai F."/>
            <person name="Hara R."/>
            <person name="Takeuchi K."/>
            <person name="Arita M."/>
            <person name="Imose N."/>
            <person name="Musashino K."/>
            <person name="Yuuki H."/>
            <person name="Oshima A."/>
            <person name="Sasaki N."/>
            <person name="Aotsuka S."/>
            <person name="Yoshikawa Y."/>
            <person name="Matsunawa H."/>
            <person name="Ichihara T."/>
            <person name="Shiohata N."/>
            <person name="Sano S."/>
            <person name="Moriya S."/>
            <person name="Momiyama H."/>
            <person name="Satoh N."/>
            <person name="Takami S."/>
            <person name="Terashima Y."/>
            <person name="Suzuki O."/>
            <person name="Nakagawa S."/>
            <person name="Senoh A."/>
            <person name="Mizoguchi H."/>
            <person name="Goto Y."/>
            <person name="Shimizu F."/>
            <person name="Wakebe H."/>
            <person name="Hishigaki H."/>
            <person name="Watanabe T."/>
            <person name="Sugiyama A."/>
            <person name="Takemoto M."/>
            <person name="Kawakami B."/>
            <person name="Yamazaki M."/>
            <person name="Watanabe K."/>
            <person name="Kumagai A."/>
            <person name="Itakura S."/>
            <person name="Fukuzumi Y."/>
            <person name="Fujimori Y."/>
            <person name="Komiyama M."/>
            <person name="Tashiro H."/>
            <person name="Tanigami A."/>
            <person name="Fujiwara T."/>
            <person name="Ono T."/>
            <person name="Yamada K."/>
            <person name="Fujii Y."/>
            <person name="Ozaki K."/>
            <person name="Hirao M."/>
            <person name="Ohmori Y."/>
            <person name="Kawabata A."/>
            <person name="Hikiji T."/>
            <person name="Kobatake N."/>
            <person name="Inagaki H."/>
            <person name="Ikema Y."/>
            <person name="Okamoto S."/>
            <person name="Okitani R."/>
            <person name="Kawakami T."/>
            <person name="Noguchi S."/>
            <person name="Itoh T."/>
            <person name="Shigeta K."/>
            <person name="Senba T."/>
            <person name="Matsumura K."/>
            <person name="Nakajima Y."/>
            <person name="Mizuno T."/>
            <person name="Morinaga M."/>
            <person name="Sasaki M."/>
            <person name="Togashi T."/>
            <person name="Oyama M."/>
            <person name="Hata H."/>
            <person name="Watanabe M."/>
            <person name="Komatsu T."/>
            <person name="Mizushima-Sugano J."/>
            <person name="Satoh T."/>
            <person name="Shirai Y."/>
            <person name="Takahashi Y."/>
            <person name="Nakagawa K."/>
            <person name="Okumura K."/>
            <person name="Nagase T."/>
            <person name="Nomura N."/>
            <person name="Kikuchi H."/>
            <person name="Masuho Y."/>
            <person name="Yamashita R."/>
            <person name="Nakai K."/>
            <person name="Yada T."/>
            <person name="Nakamura Y."/>
            <person name="Ohara O."/>
            <person name="Isogai T."/>
            <person name="Sugano S."/>
        </authorList>
    </citation>
    <scope>NUCLEOTIDE SEQUENCE [LARGE SCALE MRNA] (ISOFORMS 2 AND 4)</scope>
    <source>
        <tissue>Thalamus</tissue>
        <tissue>Trachea</tissue>
    </source>
</reference>
<reference key="6">
    <citation type="journal article" date="2006" name="Nature">
        <title>DNA sequence of human chromosome 17 and analysis of rearrangement in the human lineage.</title>
        <authorList>
            <person name="Zody M.C."/>
            <person name="Garber M."/>
            <person name="Adams D.J."/>
            <person name="Sharpe T."/>
            <person name="Harrow J."/>
            <person name="Lupski J.R."/>
            <person name="Nicholson C."/>
            <person name="Searle S.M."/>
            <person name="Wilming L."/>
            <person name="Young S.K."/>
            <person name="Abouelleil A."/>
            <person name="Allen N.R."/>
            <person name="Bi W."/>
            <person name="Bloom T."/>
            <person name="Borowsky M.L."/>
            <person name="Bugalter B.E."/>
            <person name="Butler J."/>
            <person name="Chang J.L."/>
            <person name="Chen C.-K."/>
            <person name="Cook A."/>
            <person name="Corum B."/>
            <person name="Cuomo C.A."/>
            <person name="de Jong P.J."/>
            <person name="DeCaprio D."/>
            <person name="Dewar K."/>
            <person name="FitzGerald M."/>
            <person name="Gilbert J."/>
            <person name="Gibson R."/>
            <person name="Gnerre S."/>
            <person name="Goldstein S."/>
            <person name="Grafham D.V."/>
            <person name="Grocock R."/>
            <person name="Hafez N."/>
            <person name="Hagopian D.S."/>
            <person name="Hart E."/>
            <person name="Norman C.H."/>
            <person name="Humphray S."/>
            <person name="Jaffe D.B."/>
            <person name="Jones M."/>
            <person name="Kamal M."/>
            <person name="Khodiyar V.K."/>
            <person name="LaButti K."/>
            <person name="Laird G."/>
            <person name="Lehoczky J."/>
            <person name="Liu X."/>
            <person name="Lokyitsang T."/>
            <person name="Loveland J."/>
            <person name="Lui A."/>
            <person name="Macdonald P."/>
            <person name="Major J.E."/>
            <person name="Matthews L."/>
            <person name="Mauceli E."/>
            <person name="McCarroll S.A."/>
            <person name="Mihalev A.H."/>
            <person name="Mudge J."/>
            <person name="Nguyen C."/>
            <person name="Nicol R."/>
            <person name="O'Leary S.B."/>
            <person name="Osoegawa K."/>
            <person name="Schwartz D.C."/>
            <person name="Shaw-Smith C."/>
            <person name="Stankiewicz P."/>
            <person name="Steward C."/>
            <person name="Swarbreck D."/>
            <person name="Venkataraman V."/>
            <person name="Whittaker C.A."/>
            <person name="Yang X."/>
            <person name="Zimmer A.R."/>
            <person name="Bradley A."/>
            <person name="Hubbard T."/>
            <person name="Birren B.W."/>
            <person name="Rogers J."/>
            <person name="Lander E.S."/>
            <person name="Nusbaum C."/>
        </authorList>
    </citation>
    <scope>NUCLEOTIDE SEQUENCE [LARGE SCALE GENOMIC DNA]</scope>
</reference>
<reference key="7">
    <citation type="submission" date="2005-09" db="EMBL/GenBank/DDBJ databases">
        <authorList>
            <person name="Mural R.J."/>
            <person name="Istrail S."/>
            <person name="Sutton G.G."/>
            <person name="Florea L."/>
            <person name="Halpern A.L."/>
            <person name="Mobarry C.M."/>
            <person name="Lippert R."/>
            <person name="Walenz B."/>
            <person name="Shatkay H."/>
            <person name="Dew I."/>
            <person name="Miller J.R."/>
            <person name="Flanigan M.J."/>
            <person name="Edwards N.J."/>
            <person name="Bolanos R."/>
            <person name="Fasulo D."/>
            <person name="Halldorsson B.V."/>
            <person name="Hannenhalli S."/>
            <person name="Turner R."/>
            <person name="Yooseph S."/>
            <person name="Lu F."/>
            <person name="Nusskern D.R."/>
            <person name="Shue B.C."/>
            <person name="Zheng X.H."/>
            <person name="Zhong F."/>
            <person name="Delcher A.L."/>
            <person name="Huson D.H."/>
            <person name="Kravitz S.A."/>
            <person name="Mouchard L."/>
            <person name="Reinert K."/>
            <person name="Remington K.A."/>
            <person name="Clark A.G."/>
            <person name="Waterman M.S."/>
            <person name="Eichler E.E."/>
            <person name="Adams M.D."/>
            <person name="Hunkapiller M.W."/>
            <person name="Myers E.W."/>
            <person name="Venter J.C."/>
        </authorList>
    </citation>
    <scope>NUCLEOTIDE SEQUENCE [LARGE SCALE GENOMIC DNA]</scope>
</reference>
<reference key="8">
    <citation type="journal article" date="2004" name="Genome Res.">
        <title>The status, quality, and expansion of the NIH full-length cDNA project: the Mammalian Gene Collection (MGC).</title>
        <authorList>
            <consortium name="The MGC Project Team"/>
        </authorList>
    </citation>
    <scope>NUCLEOTIDE SEQUENCE [LARGE SCALE MRNA] (ISOFORM 1)</scope>
    <source>
        <tissue>Eye</tissue>
        <tissue>Skin</tissue>
    </source>
</reference>
<reference key="9">
    <citation type="journal article" date="2000" name="Proc. Natl. Acad. Sci. U.S.A.">
        <title>Detection of leukemia-associated MLL-GAS7 translocation early during chemotherapy with DNA topoisomerase II inhibitors.</title>
        <authorList>
            <person name="Megonigal M.D."/>
            <person name="Cheung N.-K.V."/>
            <person name="Rappaport E.F."/>
            <person name="Nowell P.C."/>
            <person name="Wilson R.B."/>
            <person name="Jones D.H."/>
            <person name="Addya K."/>
            <person name="Leonard D.G.B."/>
            <person name="Kushner B.H."/>
            <person name="Williams T.M."/>
            <person name="Lange B.J."/>
            <person name="Felix C.A."/>
        </authorList>
    </citation>
    <scope>PARTIAL NUCLEOTIDE SEQUENCE [MRNA]</scope>
    <scope>CHROMOSOMAL TRANSLOCATION WITH KMT2A/MLL1</scope>
</reference>
<reference key="10">
    <citation type="journal article" date="2009" name="Sci. Signal.">
        <title>Quantitative phosphoproteomic analysis of T cell receptor signaling reveals system-wide modulation of protein-protein interactions.</title>
        <authorList>
            <person name="Mayya V."/>
            <person name="Lundgren D.H."/>
            <person name="Hwang S.-I."/>
            <person name="Rezaul K."/>
            <person name="Wu L."/>
            <person name="Eng J.K."/>
            <person name="Rodionov V."/>
            <person name="Han D.K."/>
        </authorList>
    </citation>
    <scope>PHOSPHORYLATION [LARGE SCALE ANALYSIS] AT SER-117</scope>
    <scope>IDENTIFICATION BY MASS SPECTROMETRY [LARGE SCALE ANALYSIS]</scope>
    <source>
        <tissue>Leukemic T-cell</tissue>
    </source>
</reference>
<reference key="11">
    <citation type="submission" date="2007-10" db="PDB data bank">
        <title>Solution structure of the WW domain from the human growth-arrest-specific protein 7, GAS-7.</title>
        <authorList>
            <consortium name="RIKEN structural genomics initiative (RSGI)"/>
        </authorList>
    </citation>
    <scope>STRUCTURE BY NMR OF 79-111</scope>
</reference>
<dbReference type="EMBL" id="AJ224876">
    <property type="protein sequence ID" value="CAA12177.1"/>
    <property type="molecule type" value="mRNA"/>
</dbReference>
<dbReference type="EMBL" id="AB007854">
    <property type="protein sequence ID" value="BAA23690.2"/>
    <property type="status" value="ALT_INIT"/>
    <property type="molecule type" value="mRNA"/>
</dbReference>
<dbReference type="EMBL" id="AY327406">
    <property type="protein sequence ID" value="AAP92798.1"/>
    <property type="molecule type" value="mRNA"/>
</dbReference>
<dbReference type="EMBL" id="BT006891">
    <property type="protein sequence ID" value="AAP35537.1"/>
    <property type="molecule type" value="mRNA"/>
</dbReference>
<dbReference type="EMBL" id="AK292987">
    <property type="protein sequence ID" value="BAF85676.1"/>
    <property type="molecule type" value="mRNA"/>
</dbReference>
<dbReference type="EMBL" id="AK315162">
    <property type="protein sequence ID" value="BAG37606.1"/>
    <property type="molecule type" value="mRNA"/>
</dbReference>
<dbReference type="EMBL" id="AC000003">
    <property type="status" value="NOT_ANNOTATED_CDS"/>
    <property type="molecule type" value="Genomic_DNA"/>
</dbReference>
<dbReference type="EMBL" id="AC005747">
    <property type="status" value="NOT_ANNOTATED_CDS"/>
    <property type="molecule type" value="Genomic_DNA"/>
</dbReference>
<dbReference type="EMBL" id="AC026591">
    <property type="status" value="NOT_ANNOTATED_CDS"/>
    <property type="molecule type" value="Genomic_DNA"/>
</dbReference>
<dbReference type="EMBL" id="AC083783">
    <property type="status" value="NOT_ANNOTATED_CDS"/>
    <property type="molecule type" value="Genomic_DNA"/>
</dbReference>
<dbReference type="EMBL" id="AC107938">
    <property type="status" value="NOT_ANNOTATED_CDS"/>
    <property type="molecule type" value="Genomic_DNA"/>
</dbReference>
<dbReference type="EMBL" id="CH471108">
    <property type="protein sequence ID" value="EAW90013.1"/>
    <property type="molecule type" value="Genomic_DNA"/>
</dbReference>
<dbReference type="EMBL" id="CH471108">
    <property type="protein sequence ID" value="EAW90011.1"/>
    <property type="molecule type" value="Genomic_DNA"/>
</dbReference>
<dbReference type="EMBL" id="CH471108">
    <property type="protein sequence ID" value="EAW90012.1"/>
    <property type="molecule type" value="Genomic_DNA"/>
</dbReference>
<dbReference type="EMBL" id="BC001152">
    <property type="protein sequence ID" value="AAH01152.1"/>
    <property type="molecule type" value="mRNA"/>
</dbReference>
<dbReference type="EMBL" id="BC006454">
    <property type="protein sequence ID" value="AAH06454.2"/>
    <property type="molecule type" value="mRNA"/>
</dbReference>
<dbReference type="EMBL" id="AF231998">
    <property type="protein sequence ID" value="AAG26332.2"/>
    <property type="status" value="ALT_SEQ"/>
    <property type="molecule type" value="mRNA"/>
</dbReference>
<dbReference type="CCDS" id="CCDS11152.1">
    <molecule id="O60861-3"/>
</dbReference>
<dbReference type="CCDS" id="CCDS42263.1">
    <molecule id="O60861-4"/>
</dbReference>
<dbReference type="CCDS" id="CCDS45611.1">
    <molecule id="O60861-2"/>
</dbReference>
<dbReference type="CCDS" id="CCDS58518.1">
    <molecule id="O60861-1"/>
</dbReference>
<dbReference type="RefSeq" id="NP_001124303.1">
    <molecule id="O60861-1"/>
    <property type="nucleotide sequence ID" value="NM_001130831.2"/>
</dbReference>
<dbReference type="RefSeq" id="NP_003635.2">
    <molecule id="O60861-2"/>
    <property type="nucleotide sequence ID" value="NM_003644.2"/>
</dbReference>
<dbReference type="RefSeq" id="NP_958836.1">
    <molecule id="O60861-4"/>
    <property type="nucleotide sequence ID" value="NM_201432.2"/>
</dbReference>
<dbReference type="RefSeq" id="NP_958839.1">
    <molecule id="O60861-3"/>
    <property type="nucleotide sequence ID" value="NM_201433.2"/>
</dbReference>
<dbReference type="RefSeq" id="XP_005256888.1">
    <molecule id="O60861-1"/>
    <property type="nucleotide sequence ID" value="XM_005256831.5"/>
</dbReference>
<dbReference type="RefSeq" id="XP_005256889.1">
    <molecule id="O60861-1"/>
    <property type="nucleotide sequence ID" value="XM_005256832.5"/>
</dbReference>
<dbReference type="RefSeq" id="XP_011522346.1">
    <molecule id="O60861-1"/>
    <property type="nucleotide sequence ID" value="XM_011524044.4"/>
</dbReference>
<dbReference type="RefSeq" id="XP_016880728.1">
    <property type="nucleotide sequence ID" value="XM_017025239.1"/>
</dbReference>
<dbReference type="RefSeq" id="XP_047292910.1">
    <molecule id="O60861-1"/>
    <property type="nucleotide sequence ID" value="XM_047436954.1"/>
</dbReference>
<dbReference type="RefSeq" id="XP_047292911.1">
    <molecule id="O60861-1"/>
    <property type="nucleotide sequence ID" value="XM_047436955.1"/>
</dbReference>
<dbReference type="RefSeq" id="XP_047292912.1">
    <molecule id="O60861-1"/>
    <property type="nucleotide sequence ID" value="XM_047436956.1"/>
</dbReference>
<dbReference type="RefSeq" id="XP_047292913.1">
    <molecule id="O60861-1"/>
    <property type="nucleotide sequence ID" value="XM_047436957.1"/>
</dbReference>
<dbReference type="RefSeq" id="XP_054173572.1">
    <molecule id="O60861-1"/>
    <property type="nucleotide sequence ID" value="XM_054317597.1"/>
</dbReference>
<dbReference type="RefSeq" id="XP_054173573.1">
    <molecule id="O60861-1"/>
    <property type="nucleotide sequence ID" value="XM_054317598.1"/>
</dbReference>
<dbReference type="RefSeq" id="XP_054173574.1">
    <molecule id="O60861-1"/>
    <property type="nucleotide sequence ID" value="XM_054317599.1"/>
</dbReference>
<dbReference type="RefSeq" id="XP_054173575.1">
    <molecule id="O60861-1"/>
    <property type="nucleotide sequence ID" value="XM_054317600.1"/>
</dbReference>
<dbReference type="RefSeq" id="XP_054173576.1">
    <molecule id="O60861-1"/>
    <property type="nucleotide sequence ID" value="XM_054317601.1"/>
</dbReference>
<dbReference type="RefSeq" id="XP_054173577.1">
    <molecule id="O60861-1"/>
    <property type="nucleotide sequence ID" value="XM_054317602.1"/>
</dbReference>
<dbReference type="RefSeq" id="XP_054173578.1">
    <molecule id="O60861-1"/>
    <property type="nucleotide sequence ID" value="XM_054317603.1"/>
</dbReference>
<dbReference type="PDB" id="2LX7">
    <property type="method" value="NMR"/>
    <property type="chains" value="A=1-60"/>
</dbReference>
<dbReference type="PDB" id="2YSH">
    <property type="method" value="NMR"/>
    <property type="chains" value="A=79-111"/>
</dbReference>
<dbReference type="PDBsum" id="2LX7"/>
<dbReference type="PDBsum" id="2YSH"/>
<dbReference type="BMRB" id="O60861"/>
<dbReference type="SMR" id="O60861"/>
<dbReference type="BioGRID" id="114094">
    <property type="interactions" value="37"/>
</dbReference>
<dbReference type="FunCoup" id="O60861">
    <property type="interactions" value="148"/>
</dbReference>
<dbReference type="IntAct" id="O60861">
    <property type="interactions" value="24"/>
</dbReference>
<dbReference type="MINT" id="O60861"/>
<dbReference type="STRING" id="9606.ENSP00000407552"/>
<dbReference type="iPTMnet" id="O60861"/>
<dbReference type="PhosphoSitePlus" id="O60861"/>
<dbReference type="BioMuta" id="GAS7"/>
<dbReference type="jPOST" id="O60861"/>
<dbReference type="MassIVE" id="O60861"/>
<dbReference type="PaxDb" id="9606-ENSP00000407552"/>
<dbReference type="PeptideAtlas" id="O60861"/>
<dbReference type="ProteomicsDB" id="1898"/>
<dbReference type="ProteomicsDB" id="49633">
    <molecule id="O60861-3"/>
</dbReference>
<dbReference type="ProteomicsDB" id="49634">
    <molecule id="O60861-1"/>
</dbReference>
<dbReference type="ProteomicsDB" id="49635">
    <molecule id="O60861-2"/>
</dbReference>
<dbReference type="Antibodypedia" id="24803">
    <property type="antibodies" value="449 antibodies from 30 providers"/>
</dbReference>
<dbReference type="DNASU" id="8522"/>
<dbReference type="Ensembl" id="ENST00000323816.8">
    <molecule id="O60861-4"/>
    <property type="protein sequence ID" value="ENSP00000322608.5"/>
    <property type="gene ID" value="ENSG00000007237.19"/>
</dbReference>
<dbReference type="Ensembl" id="ENST00000432992.7">
    <molecule id="O60861-3"/>
    <property type="protein sequence ID" value="ENSP00000407552.2"/>
    <property type="gene ID" value="ENSG00000007237.19"/>
</dbReference>
<dbReference type="Ensembl" id="ENST00000437099.6">
    <molecule id="O60861-1"/>
    <property type="protein sequence ID" value="ENSP00000410108.2"/>
    <property type="gene ID" value="ENSG00000007237.19"/>
</dbReference>
<dbReference type="Ensembl" id="ENST00000542249.5">
    <molecule id="O60861-1"/>
    <property type="protein sequence ID" value="ENSP00000443265.2"/>
    <property type="gene ID" value="ENSG00000007237.19"/>
</dbReference>
<dbReference type="Ensembl" id="ENST00000579158.5">
    <molecule id="O60861-1"/>
    <property type="protein sequence ID" value="ENSP00000463527.2"/>
    <property type="gene ID" value="ENSG00000007237.19"/>
</dbReference>
<dbReference type="Ensembl" id="ENST00000580865.5">
    <molecule id="O60861-2"/>
    <property type="protein sequence ID" value="ENSP00000463873.1"/>
    <property type="gene ID" value="ENSG00000007237.19"/>
</dbReference>
<dbReference type="Ensembl" id="ENST00000585266.5">
    <molecule id="O60861-4"/>
    <property type="protein sequence ID" value="ENSP00000464240.2"/>
    <property type="gene ID" value="ENSG00000007237.19"/>
</dbReference>
<dbReference type="GeneID" id="8522"/>
<dbReference type="KEGG" id="hsa:8522"/>
<dbReference type="MANE-Select" id="ENST00000432992.7">
    <property type="protein sequence ID" value="ENSP00000407552.2"/>
    <property type="RefSeq nucleotide sequence ID" value="NM_201433.2"/>
    <property type="RefSeq protein sequence ID" value="NP_958839.1"/>
</dbReference>
<dbReference type="UCSC" id="uc002gmg.2">
    <molecule id="O60861-3"/>
    <property type="organism name" value="human"/>
</dbReference>
<dbReference type="AGR" id="HGNC:4169"/>
<dbReference type="CTD" id="8522"/>
<dbReference type="DisGeNET" id="8522"/>
<dbReference type="GeneCards" id="GAS7"/>
<dbReference type="HGNC" id="HGNC:4169">
    <property type="gene designation" value="GAS7"/>
</dbReference>
<dbReference type="HPA" id="ENSG00000007237">
    <property type="expression patterns" value="Tissue enriched (brain)"/>
</dbReference>
<dbReference type="MIM" id="603127">
    <property type="type" value="gene"/>
</dbReference>
<dbReference type="neXtProt" id="NX_O60861"/>
<dbReference type="OpenTargets" id="ENSG00000007237"/>
<dbReference type="PharmGKB" id="PA28583"/>
<dbReference type="VEuPathDB" id="HostDB:ENSG00000007237"/>
<dbReference type="eggNOG" id="KOG0940">
    <property type="taxonomic scope" value="Eukaryota"/>
</dbReference>
<dbReference type="eggNOG" id="KOG2398">
    <property type="taxonomic scope" value="Eukaryota"/>
</dbReference>
<dbReference type="GeneTree" id="ENSGT00940000156268"/>
<dbReference type="HOGENOM" id="CLU_052182_0_1_1"/>
<dbReference type="InParanoid" id="O60861"/>
<dbReference type="OMA" id="HGENSHN"/>
<dbReference type="OrthoDB" id="28357at2759"/>
<dbReference type="PAN-GO" id="O60861">
    <property type="GO annotations" value="6 GO annotations based on evolutionary models"/>
</dbReference>
<dbReference type="PhylomeDB" id="O60861"/>
<dbReference type="TreeFam" id="TF328986"/>
<dbReference type="PathwayCommons" id="O60861"/>
<dbReference type="SignaLink" id="O60861"/>
<dbReference type="SIGNOR" id="O60861"/>
<dbReference type="BioGRID-ORCS" id="8522">
    <property type="hits" value="11 hits in 1155 CRISPR screens"/>
</dbReference>
<dbReference type="CD-CODE" id="FB4E32DD">
    <property type="entry name" value="Presynaptic clusters and postsynaptic densities"/>
</dbReference>
<dbReference type="ChiTaRS" id="GAS7">
    <property type="organism name" value="human"/>
</dbReference>
<dbReference type="EvolutionaryTrace" id="O60861"/>
<dbReference type="GeneWiki" id="GAS7"/>
<dbReference type="GenomeRNAi" id="8522"/>
<dbReference type="Pharos" id="O60861">
    <property type="development level" value="Tbio"/>
</dbReference>
<dbReference type="PRO" id="PR:O60861"/>
<dbReference type="Proteomes" id="UP000005640">
    <property type="component" value="Chromosome 17"/>
</dbReference>
<dbReference type="RNAct" id="O60861">
    <property type="molecule type" value="protein"/>
</dbReference>
<dbReference type="Bgee" id="ENSG00000007237">
    <property type="expression patterns" value="Expressed in cerebellar vermis and 211 other cell types or tissues"/>
</dbReference>
<dbReference type="ExpressionAtlas" id="O60861">
    <property type="expression patterns" value="baseline and differential"/>
</dbReference>
<dbReference type="GO" id="GO:0005905">
    <property type="term" value="C:clathrin-coated pit"/>
    <property type="evidence" value="ECO:0000318"/>
    <property type="project" value="GO_Central"/>
</dbReference>
<dbReference type="GO" id="GO:0030136">
    <property type="term" value="C:clathrin-coated vesicle"/>
    <property type="evidence" value="ECO:0000318"/>
    <property type="project" value="GO_Central"/>
</dbReference>
<dbReference type="GO" id="GO:0005737">
    <property type="term" value="C:cytoplasm"/>
    <property type="evidence" value="ECO:0000318"/>
    <property type="project" value="GO_Central"/>
</dbReference>
<dbReference type="GO" id="GO:0042802">
    <property type="term" value="F:identical protein binding"/>
    <property type="evidence" value="ECO:0000353"/>
    <property type="project" value="IntAct"/>
</dbReference>
<dbReference type="GO" id="GO:0048268">
    <property type="term" value="P:clathrin coat assembly"/>
    <property type="evidence" value="ECO:0000318"/>
    <property type="project" value="GO_Central"/>
</dbReference>
<dbReference type="GO" id="GO:0072583">
    <property type="term" value="P:clathrin-dependent endocytosis"/>
    <property type="evidence" value="ECO:0000318"/>
    <property type="project" value="GO_Central"/>
</dbReference>
<dbReference type="GO" id="GO:0048812">
    <property type="term" value="P:neuron projection morphogenesis"/>
    <property type="evidence" value="ECO:0000318"/>
    <property type="project" value="GO_Central"/>
</dbReference>
<dbReference type="CDD" id="cd07649">
    <property type="entry name" value="F-BAR_GAS7"/>
    <property type="match status" value="1"/>
</dbReference>
<dbReference type="CDD" id="cd11829">
    <property type="entry name" value="SH3_GAS7"/>
    <property type="match status" value="1"/>
</dbReference>
<dbReference type="FunFam" id="2.20.70.10:FF:000033">
    <property type="entry name" value="Growth arrest specific 7"/>
    <property type="match status" value="1"/>
</dbReference>
<dbReference type="FunFam" id="2.30.30.40:FF:000216">
    <property type="entry name" value="growth arrest-specific protein 7 isoform X1"/>
    <property type="match status" value="1"/>
</dbReference>
<dbReference type="FunFam" id="1.20.1270.60:FF:000024">
    <property type="entry name" value="growth arrest-specific protein 7 isoform X2"/>
    <property type="match status" value="1"/>
</dbReference>
<dbReference type="Gene3D" id="2.20.70.10">
    <property type="match status" value="1"/>
</dbReference>
<dbReference type="Gene3D" id="1.20.1270.60">
    <property type="entry name" value="Arfaptin homology (AH) domain/BAR domain"/>
    <property type="match status" value="1"/>
</dbReference>
<dbReference type="Gene3D" id="2.30.30.40">
    <property type="entry name" value="SH3 Domains"/>
    <property type="match status" value="1"/>
</dbReference>
<dbReference type="InterPro" id="IPR027267">
    <property type="entry name" value="AH/BAR_dom_sf"/>
</dbReference>
<dbReference type="InterPro" id="IPR031160">
    <property type="entry name" value="F_BAR"/>
</dbReference>
<dbReference type="InterPro" id="IPR001060">
    <property type="entry name" value="FCH_dom"/>
</dbReference>
<dbReference type="InterPro" id="IPR037957">
    <property type="entry name" value="GAS7_F-BAR"/>
</dbReference>
<dbReference type="InterPro" id="IPR036028">
    <property type="entry name" value="SH3-like_dom_sf"/>
</dbReference>
<dbReference type="InterPro" id="IPR001452">
    <property type="entry name" value="SH3_domain"/>
</dbReference>
<dbReference type="InterPro" id="IPR001202">
    <property type="entry name" value="WW_dom"/>
</dbReference>
<dbReference type="InterPro" id="IPR036020">
    <property type="entry name" value="WW_dom_sf"/>
</dbReference>
<dbReference type="PANTHER" id="PTHR23065:SF57">
    <property type="entry name" value="GROWTH ARREST-SPECIFIC PROTEIN 7"/>
    <property type="match status" value="1"/>
</dbReference>
<dbReference type="PANTHER" id="PTHR23065">
    <property type="entry name" value="PROLINE-SERINE-THREONINE PHOSPHATASE INTERACTING PROTEIN 1"/>
    <property type="match status" value="1"/>
</dbReference>
<dbReference type="Pfam" id="PF00611">
    <property type="entry name" value="FCH"/>
    <property type="match status" value="1"/>
</dbReference>
<dbReference type="Pfam" id="PF14604">
    <property type="entry name" value="SH3_9"/>
    <property type="match status" value="1"/>
</dbReference>
<dbReference type="Pfam" id="PF00397">
    <property type="entry name" value="WW"/>
    <property type="match status" value="1"/>
</dbReference>
<dbReference type="Pfam" id="PF16623">
    <property type="entry name" value="WW_FCH_linker"/>
    <property type="match status" value="1"/>
</dbReference>
<dbReference type="SMART" id="SM00055">
    <property type="entry name" value="FCH"/>
    <property type="match status" value="1"/>
</dbReference>
<dbReference type="SMART" id="SM00326">
    <property type="entry name" value="SH3"/>
    <property type="match status" value="1"/>
</dbReference>
<dbReference type="SMART" id="SM00456">
    <property type="entry name" value="WW"/>
    <property type="match status" value="1"/>
</dbReference>
<dbReference type="SUPFAM" id="SSF103657">
    <property type="entry name" value="BAR/IMD domain-like"/>
    <property type="match status" value="1"/>
</dbReference>
<dbReference type="SUPFAM" id="SSF50044">
    <property type="entry name" value="SH3-domain"/>
    <property type="match status" value="1"/>
</dbReference>
<dbReference type="SUPFAM" id="SSF51045">
    <property type="entry name" value="WW domain"/>
    <property type="match status" value="1"/>
</dbReference>
<dbReference type="PROSITE" id="PS51741">
    <property type="entry name" value="F_BAR"/>
    <property type="match status" value="1"/>
</dbReference>
<dbReference type="PROSITE" id="PS50002">
    <property type="entry name" value="SH3"/>
    <property type="match status" value="1"/>
</dbReference>
<dbReference type="PROSITE" id="PS01159">
    <property type="entry name" value="WW_DOMAIN_1"/>
    <property type="match status" value="1"/>
</dbReference>
<dbReference type="PROSITE" id="PS50020">
    <property type="entry name" value="WW_DOMAIN_2"/>
    <property type="match status" value="1"/>
</dbReference>
<accession>O60861</accession>
<accession>A8KAC2</accession>
<accession>B2RCK9</accession>
<accession>O43144</accession>
<accession>Q53Y77</accession>
<accession>Q7Z571</accession>
<gene>
    <name type="primary">GAS7</name>
    <name type="synonym">KIAA0394</name>
</gene>
<evidence type="ECO:0000250" key="1"/>
<evidence type="ECO:0000250" key="2">
    <source>
        <dbReference type="UniProtKB" id="Q60780"/>
    </source>
</evidence>
<evidence type="ECO:0000255" key="3"/>
<evidence type="ECO:0000255" key="4">
    <source>
        <dbReference type="PROSITE-ProRule" id="PRU00192"/>
    </source>
</evidence>
<evidence type="ECO:0000255" key="5">
    <source>
        <dbReference type="PROSITE-ProRule" id="PRU00224"/>
    </source>
</evidence>
<evidence type="ECO:0000255" key="6">
    <source>
        <dbReference type="PROSITE-ProRule" id="PRU01077"/>
    </source>
</evidence>
<evidence type="ECO:0000256" key="7">
    <source>
        <dbReference type="SAM" id="MobiDB-lite"/>
    </source>
</evidence>
<evidence type="ECO:0000269" key="8">
    <source>
    </source>
</evidence>
<evidence type="ECO:0000303" key="9">
    <source>
    </source>
</evidence>
<evidence type="ECO:0000303" key="10">
    <source>
    </source>
</evidence>
<evidence type="ECO:0000303" key="11">
    <source>
    </source>
</evidence>
<evidence type="ECO:0000303" key="12">
    <source ref="1"/>
</evidence>
<evidence type="ECO:0000303" key="13">
    <source ref="4"/>
</evidence>
<evidence type="ECO:0000305" key="14"/>
<evidence type="ECO:0007744" key="15">
    <source>
    </source>
</evidence>
<evidence type="ECO:0007829" key="16">
    <source>
        <dbReference type="PDB" id="2LX7"/>
    </source>
</evidence>
<evidence type="ECO:0007829" key="17">
    <source>
        <dbReference type="PDB" id="2YSH"/>
    </source>
</evidence>
<comment type="function">
    <text>May play a role in promoting maturation and morphological differentiation of cerebellar neurons.</text>
</comment>
<comment type="interaction">
    <interactant intactId="EBI-2683717">
        <id>O60861</id>
    </interactant>
    <interactant intactId="EBI-741158">
        <id>Q96HA8</id>
        <label>NTAQ1</label>
    </interactant>
    <organismsDiffer>false</organismsDiffer>
    <experiments>4</experiments>
</comment>
<comment type="interaction">
    <interactant intactId="EBI-11745923">
        <id>O60861-1</id>
    </interactant>
    <interactant intactId="EBI-295634">
        <id>Q16543</id>
        <label>CDC37</label>
    </interactant>
    <organismsDiffer>false</organismsDiffer>
    <experiments>3</experiments>
</comment>
<comment type="interaction">
    <interactant intactId="EBI-11745923">
        <id>O60861-1</id>
    </interactant>
    <interactant intactId="EBI-11745923">
        <id>O60861-1</id>
        <label>GAS7</label>
    </interactant>
    <organismsDiffer>false</organismsDiffer>
    <experiments>3</experiments>
</comment>
<comment type="interaction">
    <interactant intactId="EBI-11745923">
        <id>O60861-1</id>
    </interactant>
    <interactant intactId="EBI-372521">
        <id>Q9Y4Z0</id>
        <label>LSM4</label>
    </interactant>
    <organismsDiffer>false</organismsDiffer>
    <experiments>3</experiments>
</comment>
<comment type="interaction">
    <interactant intactId="EBI-11745923">
        <id>O60861-1</id>
    </interactant>
    <interactant intactId="EBI-348259">
        <id>Q96EZ8</id>
        <label>MCRS1</label>
    </interactant>
    <organismsDiffer>false</organismsDiffer>
    <experiments>3</experiments>
</comment>
<comment type="interaction">
    <interactant intactId="EBI-11745923">
        <id>O60861-1</id>
    </interactant>
    <interactant intactId="EBI-10963850">
        <id>Q9NZQ3-3</id>
        <label>NCKIPSD</label>
    </interactant>
    <organismsDiffer>false</organismsDiffer>
    <experiments>5</experiments>
</comment>
<comment type="interaction">
    <interactant intactId="EBI-11745923">
        <id>O60861-1</id>
    </interactant>
    <interactant intactId="EBI-741158">
        <id>Q96HA8</id>
        <label>NTAQ1</label>
    </interactant>
    <organismsDiffer>false</organismsDiffer>
    <experiments>5</experiments>
</comment>
<comment type="interaction">
    <interactant intactId="EBI-11745923">
        <id>O60861-1</id>
    </interactant>
    <interactant intactId="EBI-2799703">
        <id>O95070</id>
        <label>YIF1A</label>
    </interactant>
    <organismsDiffer>false</organismsDiffer>
    <experiments>3</experiments>
</comment>
<comment type="subcellular location">
    <subcellularLocation>
        <location evidence="1">Cytoplasm</location>
    </subcellularLocation>
</comment>
<comment type="alternative products">
    <event type="alternative splicing"/>
    <isoform>
        <id>O60861-3</id>
        <name>3</name>
        <sequence type="displayed"/>
    </isoform>
    <isoform>
        <id>O60861-1</id>
        <name>1</name>
        <sequence type="described" ref="VSP_035988"/>
    </isoform>
    <isoform>
        <id>O60861-2</id>
        <name>2</name>
        <name>GAS7-CB</name>
        <sequence type="described" ref="VSP_006802 VSP_006803"/>
    </isoform>
    <isoform>
        <id>O60861-4</id>
        <name>4</name>
        <sequence type="described" ref="VSP_044294 VSP_044295"/>
    </isoform>
</comment>
<comment type="disease">
    <text evidence="8">A chromosomal aberration involving GAS7 is found in acute myeloid leukemia. Translocation t(11;17)(q23;p13) with KMT2A/MLL1.</text>
</comment>
<comment type="sequence caution" evidence="14">
    <conflict type="erroneous initiation">
        <sequence resource="EMBL-CDS" id="BAA23690"/>
    </conflict>
    <text>Extended N-terminus.</text>
</comment>
<comment type="online information" name="Atlas of Genetics and Cytogenetics in Oncology and Haematology">
    <link uri="https://atlasgeneticsoncology.org/gene/257/GAS7"/>
</comment>
<sequence>MSGARCRTLYPFSGERHGQGLRFAAGELITLLQVPDGGWWEGEKEDGLRGWFPASYVQLLEKPGMVPPPPGEESQTVILPPGWQSYLSPQGRRYYVNTTTNETTWERPSSSPGIPASPGSHRSSLPPTVNGYHASGTPAHPPETAHMSVRKSTGDSQNLGSSSPSKKQSKENTITINCVTFPHPDTMPEQQLLKPTEWSYCDYFWADKKDPQGNGTVAGFELLLQKQLKGKQMQKEMSEFIRERIKIEEDYAKNLAKLSQNSLASQEEGSLGEAWAQVKKSLADEAEVHLKFSAKLHSEVEKPLMNFRENFKKDMKKCDHHIADLRKQLASRYASVEKARKALTERQRDLEMKTQQLEIKLSNKTEEDIKKARRKSTQAGDDLMRCVDLYNQAQSKWFEEMVTTTLELERLEVERVEMIRQHLCQYTQLRHETDMFNQSTVEPVDQLLRKVDPAKDRELWVREHKTGNIRPVDMEI</sequence>